<protein>
    <recommendedName>
        <fullName evidence="1">tRNA N6-adenosine threonylcarbamoyltransferase</fullName>
        <ecNumber evidence="1">2.3.1.234</ecNumber>
    </recommendedName>
    <alternativeName>
        <fullName evidence="1">N6-L-threonylcarbamoyladenine synthase</fullName>
        <shortName evidence="1">t(6)A synthase</shortName>
    </alternativeName>
    <alternativeName>
        <fullName evidence="1">t(6)A37 threonylcarbamoyladenosine biosynthesis protein TsaD</fullName>
    </alternativeName>
    <alternativeName>
        <fullName evidence="1">tRNA threonylcarbamoyladenosine biosynthesis protein TsaD</fullName>
    </alternativeName>
</protein>
<gene>
    <name evidence="1" type="primary">tsaD</name>
    <name type="synonym">gcp</name>
    <name type="ordered locus">RT0093</name>
</gene>
<feature type="chain" id="PRO_0000303525" description="tRNA N6-adenosine threonylcarbamoyltransferase">
    <location>
        <begin position="1"/>
        <end position="387"/>
    </location>
</feature>
<feature type="binding site" evidence="1">
    <location>
        <position position="112"/>
    </location>
    <ligand>
        <name>Fe cation</name>
        <dbReference type="ChEBI" id="CHEBI:24875"/>
    </ligand>
</feature>
<feature type="binding site" evidence="1">
    <location>
        <position position="116"/>
    </location>
    <ligand>
        <name>Fe cation</name>
        <dbReference type="ChEBI" id="CHEBI:24875"/>
    </ligand>
</feature>
<feature type="binding site" evidence="1">
    <location>
        <begin position="134"/>
        <end position="138"/>
    </location>
    <ligand>
        <name>substrate</name>
    </ligand>
</feature>
<feature type="binding site" evidence="1">
    <location>
        <position position="167"/>
    </location>
    <ligand>
        <name>substrate</name>
    </ligand>
</feature>
<feature type="binding site" evidence="1">
    <location>
        <position position="180"/>
    </location>
    <ligand>
        <name>substrate</name>
    </ligand>
</feature>
<feature type="binding site" evidence="1">
    <location>
        <position position="325"/>
    </location>
    <ligand>
        <name>substrate</name>
    </ligand>
</feature>
<feature type="binding site" evidence="1">
    <location>
        <position position="353"/>
    </location>
    <ligand>
        <name>Fe cation</name>
        <dbReference type="ChEBI" id="CHEBI:24875"/>
    </ligand>
</feature>
<dbReference type="EC" id="2.3.1.234" evidence="1"/>
<dbReference type="EMBL" id="AE017197">
    <property type="protein sequence ID" value="AAU03579.1"/>
    <property type="molecule type" value="Genomic_DNA"/>
</dbReference>
<dbReference type="RefSeq" id="WP_011190566.1">
    <property type="nucleotide sequence ID" value="NC_006142.1"/>
</dbReference>
<dbReference type="SMR" id="Q68XR3"/>
<dbReference type="KEGG" id="rty:RT0093"/>
<dbReference type="eggNOG" id="COG0533">
    <property type="taxonomic scope" value="Bacteria"/>
</dbReference>
<dbReference type="HOGENOM" id="CLU_023208_0_2_5"/>
<dbReference type="OrthoDB" id="9806197at2"/>
<dbReference type="Proteomes" id="UP000000604">
    <property type="component" value="Chromosome"/>
</dbReference>
<dbReference type="GO" id="GO:0005737">
    <property type="term" value="C:cytoplasm"/>
    <property type="evidence" value="ECO:0007669"/>
    <property type="project" value="UniProtKB-SubCell"/>
</dbReference>
<dbReference type="GO" id="GO:0005506">
    <property type="term" value="F:iron ion binding"/>
    <property type="evidence" value="ECO:0007669"/>
    <property type="project" value="UniProtKB-UniRule"/>
</dbReference>
<dbReference type="GO" id="GO:0061711">
    <property type="term" value="F:N(6)-L-threonylcarbamoyladenine synthase activity"/>
    <property type="evidence" value="ECO:0007669"/>
    <property type="project" value="UniProtKB-EC"/>
</dbReference>
<dbReference type="GO" id="GO:0002949">
    <property type="term" value="P:tRNA threonylcarbamoyladenosine modification"/>
    <property type="evidence" value="ECO:0007669"/>
    <property type="project" value="UniProtKB-UniRule"/>
</dbReference>
<dbReference type="CDD" id="cd24133">
    <property type="entry name" value="ASKHA_NBD_TsaD_bac"/>
    <property type="match status" value="1"/>
</dbReference>
<dbReference type="FunFam" id="3.30.420.40:FF:000012">
    <property type="entry name" value="tRNA N6-adenosine threonylcarbamoyltransferase"/>
    <property type="match status" value="1"/>
</dbReference>
<dbReference type="Gene3D" id="3.30.420.40">
    <property type="match status" value="4"/>
</dbReference>
<dbReference type="HAMAP" id="MF_01445">
    <property type="entry name" value="TsaD"/>
    <property type="match status" value="1"/>
</dbReference>
<dbReference type="InterPro" id="IPR043129">
    <property type="entry name" value="ATPase_NBD"/>
</dbReference>
<dbReference type="InterPro" id="IPR000905">
    <property type="entry name" value="Gcp-like_dom"/>
</dbReference>
<dbReference type="InterPro" id="IPR017861">
    <property type="entry name" value="KAE1/TsaD"/>
</dbReference>
<dbReference type="InterPro" id="IPR017860">
    <property type="entry name" value="Peptidase_M22_CS"/>
</dbReference>
<dbReference type="InterPro" id="IPR022437">
    <property type="entry name" value="RPE3"/>
</dbReference>
<dbReference type="InterPro" id="IPR022450">
    <property type="entry name" value="TsaD"/>
</dbReference>
<dbReference type="NCBIfam" id="TIGR00329">
    <property type="entry name" value="gcp_kae1"/>
    <property type="match status" value="1"/>
</dbReference>
<dbReference type="NCBIfam" id="TIGR03775">
    <property type="entry name" value="RPE3"/>
    <property type="match status" value="1"/>
</dbReference>
<dbReference type="NCBIfam" id="TIGR03723">
    <property type="entry name" value="T6A_TsaD_YgjD"/>
    <property type="match status" value="1"/>
</dbReference>
<dbReference type="PANTHER" id="PTHR11735">
    <property type="entry name" value="TRNA N6-ADENOSINE THREONYLCARBAMOYLTRANSFERASE"/>
    <property type="match status" value="1"/>
</dbReference>
<dbReference type="PANTHER" id="PTHR11735:SF6">
    <property type="entry name" value="TRNA N6-ADENOSINE THREONYLCARBAMOYLTRANSFERASE, MITOCHONDRIAL"/>
    <property type="match status" value="1"/>
</dbReference>
<dbReference type="Pfam" id="PF00814">
    <property type="entry name" value="TsaD"/>
    <property type="match status" value="1"/>
</dbReference>
<dbReference type="PRINTS" id="PR00789">
    <property type="entry name" value="OSIALOPTASE"/>
</dbReference>
<dbReference type="SUPFAM" id="SSF53067">
    <property type="entry name" value="Actin-like ATPase domain"/>
    <property type="match status" value="3"/>
</dbReference>
<dbReference type="PROSITE" id="PS01016">
    <property type="entry name" value="GLYCOPROTEASE"/>
    <property type="match status" value="1"/>
</dbReference>
<name>TSAD_RICTY</name>
<sequence length="387" mass="42546">MKKILGIESSCDDTAISIITESRKILSNIIIPQNTEHAVFGGVVPEIAARSHLSNLDQALENVLTKSNTELTEISAIAATSGPGLIGGVIVGSMFARSLSSALNKPFIAINHLEGHALTVRLTDNISYPYLLLLASGGHCQFVAVLGLGKYKILGSTIDDAIGETFDKVAKMLNLSFPGGPEIEKRAKLGNPHKYKFPKPIINSGNCNMSFSGLKTAVRNLIMSLKEVNDSVINDIAASFQFTIGAILSSKMLNAIRLYQQILNYYYENVDYTTNLNLKSFRQDEFNLNHLQDITRPKSRIYLQNSFRSNLLNDTIVIAGGVAANKYLQEILSNCTQTYGYRLIAPPMHLCTDNAAMIAYAGLERYNNKLFSPLNFCPKAKWSLEDI</sequence>
<keyword id="KW-0012">Acyltransferase</keyword>
<keyword id="KW-0963">Cytoplasm</keyword>
<keyword id="KW-0408">Iron</keyword>
<keyword id="KW-0479">Metal-binding</keyword>
<keyword id="KW-0808">Transferase</keyword>
<keyword id="KW-0819">tRNA processing</keyword>
<comment type="function">
    <text evidence="1">Required for the formation of a threonylcarbamoyl group on adenosine at position 37 (t(6)A37) in tRNAs that read codons beginning with adenine. Is involved in the transfer of the threonylcarbamoyl moiety of threonylcarbamoyl-AMP (TC-AMP) to the N6 group of A37, together with TsaE and TsaB. TsaD likely plays a direct catalytic role in this reaction.</text>
</comment>
<comment type="catalytic activity">
    <reaction evidence="1">
        <text>L-threonylcarbamoyladenylate + adenosine(37) in tRNA = N(6)-L-threonylcarbamoyladenosine(37) in tRNA + AMP + H(+)</text>
        <dbReference type="Rhea" id="RHEA:37059"/>
        <dbReference type="Rhea" id="RHEA-COMP:10162"/>
        <dbReference type="Rhea" id="RHEA-COMP:10163"/>
        <dbReference type="ChEBI" id="CHEBI:15378"/>
        <dbReference type="ChEBI" id="CHEBI:73682"/>
        <dbReference type="ChEBI" id="CHEBI:74411"/>
        <dbReference type="ChEBI" id="CHEBI:74418"/>
        <dbReference type="ChEBI" id="CHEBI:456215"/>
        <dbReference type="EC" id="2.3.1.234"/>
    </reaction>
</comment>
<comment type="cofactor">
    <cofactor evidence="1">
        <name>Fe(2+)</name>
        <dbReference type="ChEBI" id="CHEBI:29033"/>
    </cofactor>
    <text evidence="1">Binds 1 Fe(2+) ion per subunit.</text>
</comment>
<comment type="subcellular location">
    <subcellularLocation>
        <location evidence="1">Cytoplasm</location>
    </subcellularLocation>
</comment>
<comment type="similarity">
    <text evidence="1">Belongs to the KAE1 / TsaD family.</text>
</comment>
<organism>
    <name type="scientific">Rickettsia typhi (strain ATCC VR-144 / Wilmington)</name>
    <dbReference type="NCBI Taxonomy" id="257363"/>
    <lineage>
        <taxon>Bacteria</taxon>
        <taxon>Pseudomonadati</taxon>
        <taxon>Pseudomonadota</taxon>
        <taxon>Alphaproteobacteria</taxon>
        <taxon>Rickettsiales</taxon>
        <taxon>Rickettsiaceae</taxon>
        <taxon>Rickettsieae</taxon>
        <taxon>Rickettsia</taxon>
        <taxon>typhus group</taxon>
    </lineage>
</organism>
<proteinExistence type="inferred from homology"/>
<evidence type="ECO:0000255" key="1">
    <source>
        <dbReference type="HAMAP-Rule" id="MF_01445"/>
    </source>
</evidence>
<reference key="1">
    <citation type="journal article" date="2004" name="J. Bacteriol.">
        <title>Complete genome sequence of Rickettsia typhi and comparison with sequences of other Rickettsiae.</title>
        <authorList>
            <person name="McLeod M.P."/>
            <person name="Qin X."/>
            <person name="Karpathy S.E."/>
            <person name="Gioia J."/>
            <person name="Highlander S.K."/>
            <person name="Fox G.E."/>
            <person name="McNeill T.Z."/>
            <person name="Jiang H."/>
            <person name="Muzny D."/>
            <person name="Jacob L.S."/>
            <person name="Hawes A.C."/>
            <person name="Sodergren E."/>
            <person name="Gill R."/>
            <person name="Hume J."/>
            <person name="Morgan M."/>
            <person name="Fan G."/>
            <person name="Amin A.G."/>
            <person name="Gibbs R.A."/>
            <person name="Hong C."/>
            <person name="Yu X.-J."/>
            <person name="Walker D.H."/>
            <person name="Weinstock G.M."/>
        </authorList>
    </citation>
    <scope>NUCLEOTIDE SEQUENCE [LARGE SCALE GENOMIC DNA]</scope>
    <source>
        <strain>ATCC VR-144 / Wilmington</strain>
    </source>
</reference>
<accession>Q68XR3</accession>